<sequence>MQIEERIVEGHLLAARTTPGNTRRISFAKITEPLEVPQLLSLQTDSFDWLVGNDKWNAAVERRRSEGEDVSSKSGLQEIFEEISPIEDFSETMSLSFENPVFYDPKYTVDECKEKDFTYSAPLYVSAEFTNNDTGEIKGQTVFMGDFPLMTDKGTFIINGTERVVVSQLVRSPGVYFERTADKTSDKDIYTAKLIPSRGAWLEFEIDKRDMVGVRLDRKRKQNVTVLLKALGWTNEQIREEFGEYESMMLTLEKDHTQGQDDALLDIYRKLRPGEPPTREAAQTLLNNYYFNPKRYDLAKVGRYKINKKLGLLEAFDQQTLTIDDVVAAIKYIVALHDGREQIEAPQGTLDISADDIDHFGNRRMRTVGELIQNQLRTGLARMERVVRERMTTQDVEAITPQSLINIRPVVAALKEFFGTSQLSQFMDQTNPIAGLTHKRRLSALGPGGLSRDRAGMEVRDVHPSHYGRMCPIETPEGPNIGLIGSLASYGRINPFGFVETPYRKVTKGKVTDQIDYLTADDEDRYVIAQANAALDDKSRFVEERVLVRQRDGEVSEVLADEVDYMDVSPRQMVSVATALIPFLEHDDANRALMGANMQRQAVPLIKSDSPLVGTGIEYRAAVDAGDVVVATAAGVVKEVSADVIETMNDDGTYSTYRLAKFKRSNQGTCINQRPLVSEGDRLEIGTPIADGPCTDEAEMALGTNLLVAFMPWQGHNYEDAIILSQRLVQEDILTSIHIEEHEVDARDTKLGPEEITRDIPNVSEEMLADLDERGIIRIGAEVTTGDVLVGKVTPKGETELTPEERLLRAIFGEKAREVRDTSMKVPHGESGTVIGVRVFDREDGDELPPGVNQLVRVYVAQKRKISVGDKLAGRHGNKGVIAKILPIEDMPFMEDGTPVDVVLNPLGVPRRMNIGQILELHLGWLAKQGWDLNLNDDKSGADWKQRLIKIHADKAEPGTKVATPVFDGAREDEITGLLGSTIPNRDGVRMIDNTGKASLFDGRSGEPFPEPVAVGYMYILKLHHLVDDKIHARSTGPYSMITQQPLGGKAQFGGQRFGEMEVWAMEAYGAAYALQELLTIKSDDVPGRVKVYEAIVKGENIPDSGIPESFKVLVKEMQSLCLNVEVLSQDGTAIEMRDAEEDVFRAAEELGIDLSRREPSSVEEV</sequence>
<comment type="function">
    <text evidence="1">DNA-dependent RNA polymerase catalyzes the transcription of DNA into RNA using the four ribonucleoside triphosphates as substrates.</text>
</comment>
<comment type="catalytic activity">
    <reaction evidence="1">
        <text>RNA(n) + a ribonucleoside 5'-triphosphate = RNA(n+1) + diphosphate</text>
        <dbReference type="Rhea" id="RHEA:21248"/>
        <dbReference type="Rhea" id="RHEA-COMP:14527"/>
        <dbReference type="Rhea" id="RHEA-COMP:17342"/>
        <dbReference type="ChEBI" id="CHEBI:33019"/>
        <dbReference type="ChEBI" id="CHEBI:61557"/>
        <dbReference type="ChEBI" id="CHEBI:140395"/>
        <dbReference type="EC" id="2.7.7.6"/>
    </reaction>
</comment>
<comment type="subunit">
    <text evidence="1">The RNAP catalytic core consists of 2 alpha, 1 beta, 1 beta' and 1 omega subunit. When a sigma factor is associated with the core the holoenzyme is formed, which can initiate transcription.</text>
</comment>
<comment type="similarity">
    <text evidence="1">Belongs to the RNA polymerase beta chain family.</text>
</comment>
<protein>
    <recommendedName>
        <fullName evidence="1">DNA-directed RNA polymerase subunit beta</fullName>
        <shortName evidence="1">RNAP subunit beta</shortName>
        <ecNumber evidence="1">2.7.7.6</ecNumber>
    </recommendedName>
    <alternativeName>
        <fullName evidence="1">RNA polymerase subunit beta</fullName>
    </alternativeName>
    <alternativeName>
        <fullName evidence="1">Transcriptase subunit beta</fullName>
    </alternativeName>
</protein>
<feature type="chain" id="PRO_0000300360" description="DNA-directed RNA polymerase subunit beta">
    <location>
        <begin position="1"/>
        <end position="1166"/>
    </location>
</feature>
<accession>A1SEK1</accession>
<proteinExistence type="inferred from homology"/>
<reference key="1">
    <citation type="submission" date="2006-12" db="EMBL/GenBank/DDBJ databases">
        <title>Complete sequence of chromosome 1 of Nocardioides sp. JS614.</title>
        <authorList>
            <person name="Copeland A."/>
            <person name="Lucas S."/>
            <person name="Lapidus A."/>
            <person name="Barry K."/>
            <person name="Detter J.C."/>
            <person name="Glavina del Rio T."/>
            <person name="Hammon N."/>
            <person name="Israni S."/>
            <person name="Dalin E."/>
            <person name="Tice H."/>
            <person name="Pitluck S."/>
            <person name="Thompson L.S."/>
            <person name="Brettin T."/>
            <person name="Bruce D."/>
            <person name="Han C."/>
            <person name="Tapia R."/>
            <person name="Schmutz J."/>
            <person name="Larimer F."/>
            <person name="Land M."/>
            <person name="Hauser L."/>
            <person name="Kyrpides N."/>
            <person name="Kim E."/>
            <person name="Mattes T."/>
            <person name="Gossett J."/>
            <person name="Richardson P."/>
        </authorList>
    </citation>
    <scope>NUCLEOTIDE SEQUENCE [LARGE SCALE GENOMIC DNA]</scope>
    <source>
        <strain>ATCC BAA-499 / JS614</strain>
    </source>
</reference>
<name>RPOB_NOCSJ</name>
<gene>
    <name evidence="1" type="primary">rpoB</name>
    <name type="ordered locus">Noca_0711</name>
</gene>
<keyword id="KW-0240">DNA-directed RNA polymerase</keyword>
<keyword id="KW-0548">Nucleotidyltransferase</keyword>
<keyword id="KW-1185">Reference proteome</keyword>
<keyword id="KW-0804">Transcription</keyword>
<keyword id="KW-0808">Transferase</keyword>
<organism>
    <name type="scientific">Nocardioides sp. (strain ATCC BAA-499 / JS614)</name>
    <dbReference type="NCBI Taxonomy" id="196162"/>
    <lineage>
        <taxon>Bacteria</taxon>
        <taxon>Bacillati</taxon>
        <taxon>Actinomycetota</taxon>
        <taxon>Actinomycetes</taxon>
        <taxon>Propionibacteriales</taxon>
        <taxon>Nocardioidaceae</taxon>
        <taxon>Nocardioides</taxon>
    </lineage>
</organism>
<dbReference type="EC" id="2.7.7.6" evidence="1"/>
<dbReference type="EMBL" id="CP000509">
    <property type="protein sequence ID" value="ABL80236.1"/>
    <property type="molecule type" value="Genomic_DNA"/>
</dbReference>
<dbReference type="SMR" id="A1SEK1"/>
<dbReference type="STRING" id="196162.Noca_0711"/>
<dbReference type="KEGG" id="nca:Noca_0711"/>
<dbReference type="eggNOG" id="COG0085">
    <property type="taxonomic scope" value="Bacteria"/>
</dbReference>
<dbReference type="HOGENOM" id="CLU_000524_4_1_11"/>
<dbReference type="Proteomes" id="UP000000640">
    <property type="component" value="Chromosome"/>
</dbReference>
<dbReference type="GO" id="GO:0000428">
    <property type="term" value="C:DNA-directed RNA polymerase complex"/>
    <property type="evidence" value="ECO:0007669"/>
    <property type="project" value="UniProtKB-KW"/>
</dbReference>
<dbReference type="GO" id="GO:0003677">
    <property type="term" value="F:DNA binding"/>
    <property type="evidence" value="ECO:0007669"/>
    <property type="project" value="UniProtKB-UniRule"/>
</dbReference>
<dbReference type="GO" id="GO:0003899">
    <property type="term" value="F:DNA-directed RNA polymerase activity"/>
    <property type="evidence" value="ECO:0007669"/>
    <property type="project" value="UniProtKB-UniRule"/>
</dbReference>
<dbReference type="GO" id="GO:0032549">
    <property type="term" value="F:ribonucleoside binding"/>
    <property type="evidence" value="ECO:0007669"/>
    <property type="project" value="InterPro"/>
</dbReference>
<dbReference type="GO" id="GO:0006351">
    <property type="term" value="P:DNA-templated transcription"/>
    <property type="evidence" value="ECO:0007669"/>
    <property type="project" value="UniProtKB-UniRule"/>
</dbReference>
<dbReference type="CDD" id="cd00653">
    <property type="entry name" value="RNA_pol_B_RPB2"/>
    <property type="match status" value="1"/>
</dbReference>
<dbReference type="Gene3D" id="2.40.50.100">
    <property type="match status" value="1"/>
</dbReference>
<dbReference type="Gene3D" id="2.40.50.150">
    <property type="match status" value="1"/>
</dbReference>
<dbReference type="Gene3D" id="3.90.1100.10">
    <property type="match status" value="1"/>
</dbReference>
<dbReference type="Gene3D" id="2.30.150.10">
    <property type="entry name" value="DNA-directed RNA polymerase, beta subunit, external 1 domain"/>
    <property type="match status" value="1"/>
</dbReference>
<dbReference type="Gene3D" id="2.40.270.10">
    <property type="entry name" value="DNA-directed RNA polymerase, subunit 2, domain 6"/>
    <property type="match status" value="1"/>
</dbReference>
<dbReference type="Gene3D" id="3.90.1800.10">
    <property type="entry name" value="RNA polymerase alpha subunit dimerisation domain"/>
    <property type="match status" value="1"/>
</dbReference>
<dbReference type="Gene3D" id="3.90.1110.10">
    <property type="entry name" value="RNA polymerase Rpb2, domain 2"/>
    <property type="match status" value="1"/>
</dbReference>
<dbReference type="HAMAP" id="MF_01321">
    <property type="entry name" value="RNApol_bact_RpoB"/>
    <property type="match status" value="1"/>
</dbReference>
<dbReference type="InterPro" id="IPR042107">
    <property type="entry name" value="DNA-dir_RNA_pol_bsu_ext_1_sf"/>
</dbReference>
<dbReference type="InterPro" id="IPR019462">
    <property type="entry name" value="DNA-dir_RNA_pol_bsu_external_1"/>
</dbReference>
<dbReference type="InterPro" id="IPR015712">
    <property type="entry name" value="DNA-dir_RNA_pol_su2"/>
</dbReference>
<dbReference type="InterPro" id="IPR007120">
    <property type="entry name" value="DNA-dir_RNAP_su2_dom"/>
</dbReference>
<dbReference type="InterPro" id="IPR037033">
    <property type="entry name" value="DNA-dir_RNAP_su2_hyb_sf"/>
</dbReference>
<dbReference type="InterPro" id="IPR010243">
    <property type="entry name" value="RNA_pol_bsu_bac"/>
</dbReference>
<dbReference type="InterPro" id="IPR007121">
    <property type="entry name" value="RNA_pol_bsu_CS"/>
</dbReference>
<dbReference type="InterPro" id="IPR007644">
    <property type="entry name" value="RNA_pol_bsu_protrusion"/>
</dbReference>
<dbReference type="InterPro" id="IPR007642">
    <property type="entry name" value="RNA_pol_Rpb2_2"/>
</dbReference>
<dbReference type="InterPro" id="IPR037034">
    <property type="entry name" value="RNA_pol_Rpb2_2_sf"/>
</dbReference>
<dbReference type="InterPro" id="IPR007645">
    <property type="entry name" value="RNA_pol_Rpb2_3"/>
</dbReference>
<dbReference type="InterPro" id="IPR007641">
    <property type="entry name" value="RNA_pol_Rpb2_7"/>
</dbReference>
<dbReference type="InterPro" id="IPR014724">
    <property type="entry name" value="RNA_pol_RPB2_OB-fold"/>
</dbReference>
<dbReference type="NCBIfam" id="NF001616">
    <property type="entry name" value="PRK00405.1"/>
    <property type="match status" value="1"/>
</dbReference>
<dbReference type="NCBIfam" id="TIGR02013">
    <property type="entry name" value="rpoB"/>
    <property type="match status" value="1"/>
</dbReference>
<dbReference type="PANTHER" id="PTHR20856">
    <property type="entry name" value="DNA-DIRECTED RNA POLYMERASE I SUBUNIT 2"/>
    <property type="match status" value="1"/>
</dbReference>
<dbReference type="Pfam" id="PF04563">
    <property type="entry name" value="RNA_pol_Rpb2_1"/>
    <property type="match status" value="1"/>
</dbReference>
<dbReference type="Pfam" id="PF04561">
    <property type="entry name" value="RNA_pol_Rpb2_2"/>
    <property type="match status" value="1"/>
</dbReference>
<dbReference type="Pfam" id="PF04565">
    <property type="entry name" value="RNA_pol_Rpb2_3"/>
    <property type="match status" value="1"/>
</dbReference>
<dbReference type="Pfam" id="PF10385">
    <property type="entry name" value="RNA_pol_Rpb2_45"/>
    <property type="match status" value="1"/>
</dbReference>
<dbReference type="Pfam" id="PF00562">
    <property type="entry name" value="RNA_pol_Rpb2_6"/>
    <property type="match status" value="1"/>
</dbReference>
<dbReference type="Pfam" id="PF04560">
    <property type="entry name" value="RNA_pol_Rpb2_7"/>
    <property type="match status" value="1"/>
</dbReference>
<dbReference type="SUPFAM" id="SSF64484">
    <property type="entry name" value="beta and beta-prime subunits of DNA dependent RNA-polymerase"/>
    <property type="match status" value="1"/>
</dbReference>
<dbReference type="PROSITE" id="PS01166">
    <property type="entry name" value="RNA_POL_BETA"/>
    <property type="match status" value="1"/>
</dbReference>
<evidence type="ECO:0000255" key="1">
    <source>
        <dbReference type="HAMAP-Rule" id="MF_01321"/>
    </source>
</evidence>